<name>Y1627_SHESA</name>
<dbReference type="EMBL" id="CP000469">
    <property type="protein sequence ID" value="ABK47860.1"/>
    <property type="molecule type" value="Genomic_DNA"/>
</dbReference>
<dbReference type="RefSeq" id="WP_011716663.1">
    <property type="nucleotide sequence ID" value="NC_008577.1"/>
</dbReference>
<dbReference type="SMR" id="A0KVP1"/>
<dbReference type="STRING" id="94122.Shewana3_1627"/>
<dbReference type="KEGG" id="shn:Shewana3_1627"/>
<dbReference type="eggNOG" id="COG1671">
    <property type="taxonomic scope" value="Bacteria"/>
</dbReference>
<dbReference type="HOGENOM" id="CLU_106619_1_0_6"/>
<dbReference type="OrthoDB" id="9798918at2"/>
<dbReference type="Proteomes" id="UP000002589">
    <property type="component" value="Chromosome"/>
</dbReference>
<dbReference type="CDD" id="cd18720">
    <property type="entry name" value="PIN_YqxD-like"/>
    <property type="match status" value="1"/>
</dbReference>
<dbReference type="HAMAP" id="MF_00489">
    <property type="entry name" value="UPF0178"/>
    <property type="match status" value="1"/>
</dbReference>
<dbReference type="InterPro" id="IPR003791">
    <property type="entry name" value="UPF0178"/>
</dbReference>
<dbReference type="NCBIfam" id="NF001095">
    <property type="entry name" value="PRK00124.1"/>
    <property type="match status" value="1"/>
</dbReference>
<dbReference type="PANTHER" id="PTHR35146">
    <property type="entry name" value="UPF0178 PROTEIN YAII"/>
    <property type="match status" value="1"/>
</dbReference>
<dbReference type="PANTHER" id="PTHR35146:SF1">
    <property type="entry name" value="UPF0178 PROTEIN YAII"/>
    <property type="match status" value="1"/>
</dbReference>
<dbReference type="Pfam" id="PF02639">
    <property type="entry name" value="DUF188"/>
    <property type="match status" value="1"/>
</dbReference>
<proteinExistence type="inferred from homology"/>
<feature type="chain" id="PRO_1000014445" description="UPF0178 protein Shewana3_1627">
    <location>
        <begin position="1"/>
        <end position="150"/>
    </location>
</feature>
<protein>
    <recommendedName>
        <fullName evidence="1">UPF0178 protein Shewana3_1627</fullName>
    </recommendedName>
</protein>
<comment type="similarity">
    <text evidence="1">Belongs to the UPF0178 family.</text>
</comment>
<gene>
    <name type="ordered locus">Shewana3_1627</name>
</gene>
<organism>
    <name type="scientific">Shewanella sp. (strain ANA-3)</name>
    <dbReference type="NCBI Taxonomy" id="94122"/>
    <lineage>
        <taxon>Bacteria</taxon>
        <taxon>Pseudomonadati</taxon>
        <taxon>Pseudomonadota</taxon>
        <taxon>Gammaproteobacteria</taxon>
        <taxon>Alteromonadales</taxon>
        <taxon>Shewanellaceae</taxon>
        <taxon>Shewanella</taxon>
    </lineage>
</organism>
<evidence type="ECO:0000255" key="1">
    <source>
        <dbReference type="HAMAP-Rule" id="MF_00489"/>
    </source>
</evidence>
<reference key="1">
    <citation type="submission" date="2006-09" db="EMBL/GenBank/DDBJ databases">
        <title>Complete sequence of chromosome 1 of Shewanella sp. ANA-3.</title>
        <authorList>
            <person name="Copeland A."/>
            <person name="Lucas S."/>
            <person name="Lapidus A."/>
            <person name="Barry K."/>
            <person name="Detter J.C."/>
            <person name="Glavina del Rio T."/>
            <person name="Hammon N."/>
            <person name="Israni S."/>
            <person name="Dalin E."/>
            <person name="Tice H."/>
            <person name="Pitluck S."/>
            <person name="Chertkov O."/>
            <person name="Brettin T."/>
            <person name="Bruce D."/>
            <person name="Han C."/>
            <person name="Tapia R."/>
            <person name="Gilna P."/>
            <person name="Schmutz J."/>
            <person name="Larimer F."/>
            <person name="Land M."/>
            <person name="Hauser L."/>
            <person name="Kyrpides N."/>
            <person name="Kim E."/>
            <person name="Newman D."/>
            <person name="Salticov C."/>
            <person name="Konstantinidis K."/>
            <person name="Klappenback J."/>
            <person name="Tiedje J."/>
            <person name="Richardson P."/>
        </authorList>
    </citation>
    <scope>NUCLEOTIDE SEQUENCE [LARGE SCALE GENOMIC DNA]</scope>
    <source>
        <strain>ANA-3</strain>
    </source>
</reference>
<accession>A0KVP1</accession>
<sequence>MGQYKIWVDADACPNPIKEILFRAAERKSLPLVLVANQMLRVPPSPYISQVRVGSGFDVADQYIVNHVEPTHLVITADIPLAAQVIEKGALALNPRGELYTTDNIRQKLTMRDFMEDLRSSGVHTGGPDALSAADKQAFANSLDKWLVRV</sequence>